<name>PURL_NOCFA</name>
<gene>
    <name evidence="1" type="primary">purL</name>
    <name type="ordered locus">NFA_5730</name>
</gene>
<protein>
    <recommendedName>
        <fullName evidence="1">Phosphoribosylformylglycinamidine synthase subunit PurL</fullName>
        <shortName evidence="1">FGAM synthase</shortName>
        <ecNumber evidence="1">6.3.5.3</ecNumber>
    </recommendedName>
    <alternativeName>
        <fullName evidence="1">Formylglycinamide ribonucleotide amidotransferase subunit II</fullName>
        <shortName evidence="1">FGAR amidotransferase II</shortName>
        <shortName evidence="1">FGAR-AT II</shortName>
    </alternativeName>
    <alternativeName>
        <fullName evidence="1">Glutamine amidotransferase PurL</fullName>
    </alternativeName>
    <alternativeName>
        <fullName evidence="1">Phosphoribosylformylglycinamidine synthase subunit II</fullName>
    </alternativeName>
</protein>
<comment type="function">
    <text evidence="1">Part of the phosphoribosylformylglycinamidine synthase complex involved in the purines biosynthetic pathway. Catalyzes the ATP-dependent conversion of formylglycinamide ribonucleotide (FGAR) and glutamine to yield formylglycinamidine ribonucleotide (FGAM) and glutamate. The FGAM synthase complex is composed of three subunits. PurQ produces an ammonia molecule by converting glutamine to glutamate. PurL transfers the ammonia molecule to FGAR to form FGAM in an ATP-dependent manner. PurS interacts with PurQ and PurL and is thought to assist in the transfer of the ammonia molecule from PurQ to PurL.</text>
</comment>
<comment type="catalytic activity">
    <reaction evidence="1">
        <text>N(2)-formyl-N(1)-(5-phospho-beta-D-ribosyl)glycinamide + L-glutamine + ATP + H2O = 2-formamido-N(1)-(5-O-phospho-beta-D-ribosyl)acetamidine + L-glutamate + ADP + phosphate + H(+)</text>
        <dbReference type="Rhea" id="RHEA:17129"/>
        <dbReference type="ChEBI" id="CHEBI:15377"/>
        <dbReference type="ChEBI" id="CHEBI:15378"/>
        <dbReference type="ChEBI" id="CHEBI:29985"/>
        <dbReference type="ChEBI" id="CHEBI:30616"/>
        <dbReference type="ChEBI" id="CHEBI:43474"/>
        <dbReference type="ChEBI" id="CHEBI:58359"/>
        <dbReference type="ChEBI" id="CHEBI:147286"/>
        <dbReference type="ChEBI" id="CHEBI:147287"/>
        <dbReference type="ChEBI" id="CHEBI:456216"/>
        <dbReference type="EC" id="6.3.5.3"/>
    </reaction>
</comment>
<comment type="pathway">
    <text evidence="1">Purine metabolism; IMP biosynthesis via de novo pathway; 5-amino-1-(5-phospho-D-ribosyl)imidazole from N(2)-formyl-N(1)-(5-phospho-D-ribosyl)glycinamide: step 1/2.</text>
</comment>
<comment type="subunit">
    <text evidence="1">Monomer. Part of the FGAM synthase complex composed of 1 PurL, 1 PurQ and 2 PurS subunits.</text>
</comment>
<comment type="subcellular location">
    <subcellularLocation>
        <location evidence="1">Cytoplasm</location>
    </subcellularLocation>
</comment>
<comment type="similarity">
    <text evidence="1">Belongs to the FGAMS family.</text>
</comment>
<evidence type="ECO:0000255" key="1">
    <source>
        <dbReference type="HAMAP-Rule" id="MF_00420"/>
    </source>
</evidence>
<sequence>MTPQVDTVSAAAATPDVAQPYKELGLKDDEYARIKEILGRRPTDAELAMYSVMWSEHCSYKSSKVHLRYFGETTTEEMRKSMLAGIGENAGVVDVGDGWAVTFKVESHNHPSYVEPYQGAATGVGGIVRDIMAMGARPVAVMDQLRFGAADHPDTRRVVDGVVRGIGGYGNSLGLPNVGGETVFDASYQGNPLVNALCAGVMRVEDLHLAFASGTGNKIILFGARTGLDGIGGVSVLASDTFSGDESGAGRKKLPSVQVGDPFTEKVLIECCLELYAAKLVVGIQDLGGAGLSCATSELAAAGDGGMRIELDKVPLRAADMTPAEILSSESQERMCAVVTPENVEAFMAVCRKWDVLATVIGEVTDGDRLVVTWHGETVVDVPPRTVAHEGPVYERPVQRPDYQDALIADTPDTLPRPATADELRETLLRMISSPQLCSRKWITEQYDRYVRGNTVLAEDADAGVIRIDEQTGRGIALATDASGRYTKLDPYAGAQLALAEAFRNVASTGATPKAVTNCLNFGSPEDPGVMWQFQQAVRGLADGCVALGIPVTGGNVSFYNQTGQDAILPTPVVGVLGVIDDVHRRIPTGIGLEPGETLILLGDTRDEFGGSIWAQVVHDHLGGVPPKVDFAREQLLAEVLTAGSRDGMISAAHDLSEGGLAQAVVEAALAGETGCRILLPEDADPFVTLFSESAGRVLVAVPRSEETRFTRMCEARQLPWVRIGVVDQGSDALEVQGHFSIPLTELRAAFEGTLPKLFGAETA</sequence>
<dbReference type="EC" id="6.3.5.3" evidence="1"/>
<dbReference type="EMBL" id="AP006618">
    <property type="protein sequence ID" value="BAD55418.1"/>
    <property type="molecule type" value="Genomic_DNA"/>
</dbReference>
<dbReference type="RefSeq" id="WP_011207105.1">
    <property type="nucleotide sequence ID" value="NC_006361.1"/>
</dbReference>
<dbReference type="SMR" id="Q5Z2C3"/>
<dbReference type="STRING" id="247156.NFA_5730"/>
<dbReference type="GeneID" id="61131408"/>
<dbReference type="KEGG" id="nfa:NFA_5730"/>
<dbReference type="eggNOG" id="COG0046">
    <property type="taxonomic scope" value="Bacteria"/>
</dbReference>
<dbReference type="HOGENOM" id="CLU_003100_0_1_11"/>
<dbReference type="OrthoDB" id="9804441at2"/>
<dbReference type="UniPathway" id="UPA00074">
    <property type="reaction ID" value="UER00128"/>
</dbReference>
<dbReference type="Proteomes" id="UP000006820">
    <property type="component" value="Chromosome"/>
</dbReference>
<dbReference type="GO" id="GO:0005737">
    <property type="term" value="C:cytoplasm"/>
    <property type="evidence" value="ECO:0007669"/>
    <property type="project" value="UniProtKB-SubCell"/>
</dbReference>
<dbReference type="GO" id="GO:0005524">
    <property type="term" value="F:ATP binding"/>
    <property type="evidence" value="ECO:0007669"/>
    <property type="project" value="UniProtKB-UniRule"/>
</dbReference>
<dbReference type="GO" id="GO:0000287">
    <property type="term" value="F:magnesium ion binding"/>
    <property type="evidence" value="ECO:0007669"/>
    <property type="project" value="UniProtKB-UniRule"/>
</dbReference>
<dbReference type="GO" id="GO:0004642">
    <property type="term" value="F:phosphoribosylformylglycinamidine synthase activity"/>
    <property type="evidence" value="ECO:0007669"/>
    <property type="project" value="UniProtKB-UniRule"/>
</dbReference>
<dbReference type="GO" id="GO:0006189">
    <property type="term" value="P:'de novo' IMP biosynthetic process"/>
    <property type="evidence" value="ECO:0007669"/>
    <property type="project" value="UniProtKB-UniRule"/>
</dbReference>
<dbReference type="CDD" id="cd02203">
    <property type="entry name" value="PurL_repeat1"/>
    <property type="match status" value="1"/>
</dbReference>
<dbReference type="CDD" id="cd02204">
    <property type="entry name" value="PurL_repeat2"/>
    <property type="match status" value="1"/>
</dbReference>
<dbReference type="FunFam" id="3.30.1330.10:FF:000004">
    <property type="entry name" value="Phosphoribosylformylglycinamidine synthase subunit PurL"/>
    <property type="match status" value="1"/>
</dbReference>
<dbReference type="Gene3D" id="3.90.650.10">
    <property type="entry name" value="PurM-like C-terminal domain"/>
    <property type="match status" value="2"/>
</dbReference>
<dbReference type="Gene3D" id="3.30.1330.10">
    <property type="entry name" value="PurM-like, N-terminal domain"/>
    <property type="match status" value="2"/>
</dbReference>
<dbReference type="HAMAP" id="MF_00420">
    <property type="entry name" value="PurL_2"/>
    <property type="match status" value="1"/>
</dbReference>
<dbReference type="InterPro" id="IPR010074">
    <property type="entry name" value="PRibForGlyAmidine_synth_PurL"/>
</dbReference>
<dbReference type="InterPro" id="IPR041609">
    <property type="entry name" value="PurL_linker"/>
</dbReference>
<dbReference type="InterPro" id="IPR010918">
    <property type="entry name" value="PurM-like_C_dom"/>
</dbReference>
<dbReference type="InterPro" id="IPR036676">
    <property type="entry name" value="PurM-like_C_sf"/>
</dbReference>
<dbReference type="InterPro" id="IPR016188">
    <property type="entry name" value="PurM-like_N"/>
</dbReference>
<dbReference type="InterPro" id="IPR036921">
    <property type="entry name" value="PurM-like_N_sf"/>
</dbReference>
<dbReference type="NCBIfam" id="TIGR01736">
    <property type="entry name" value="FGAM_synth_II"/>
    <property type="match status" value="1"/>
</dbReference>
<dbReference type="NCBIfam" id="NF002290">
    <property type="entry name" value="PRK01213.1"/>
    <property type="match status" value="1"/>
</dbReference>
<dbReference type="PANTHER" id="PTHR43555">
    <property type="entry name" value="PHOSPHORIBOSYLFORMYLGLYCINAMIDINE SYNTHASE SUBUNIT PURL"/>
    <property type="match status" value="1"/>
</dbReference>
<dbReference type="PANTHER" id="PTHR43555:SF1">
    <property type="entry name" value="PHOSPHORIBOSYLFORMYLGLYCINAMIDINE SYNTHASE SUBUNIT PURL"/>
    <property type="match status" value="1"/>
</dbReference>
<dbReference type="Pfam" id="PF00586">
    <property type="entry name" value="AIRS"/>
    <property type="match status" value="2"/>
</dbReference>
<dbReference type="Pfam" id="PF02769">
    <property type="entry name" value="AIRS_C"/>
    <property type="match status" value="2"/>
</dbReference>
<dbReference type="Pfam" id="PF18072">
    <property type="entry name" value="FGAR-AT_linker"/>
    <property type="match status" value="1"/>
</dbReference>
<dbReference type="PIRSF" id="PIRSF001587">
    <property type="entry name" value="FGAM_synthase_II"/>
    <property type="match status" value="1"/>
</dbReference>
<dbReference type="SUPFAM" id="SSF56042">
    <property type="entry name" value="PurM C-terminal domain-like"/>
    <property type="match status" value="2"/>
</dbReference>
<dbReference type="SUPFAM" id="SSF55326">
    <property type="entry name" value="PurM N-terminal domain-like"/>
    <property type="match status" value="2"/>
</dbReference>
<accession>Q5Z2C3</accession>
<keyword id="KW-0067">ATP-binding</keyword>
<keyword id="KW-0963">Cytoplasm</keyword>
<keyword id="KW-0436">Ligase</keyword>
<keyword id="KW-0460">Magnesium</keyword>
<keyword id="KW-0479">Metal-binding</keyword>
<keyword id="KW-0547">Nucleotide-binding</keyword>
<keyword id="KW-0658">Purine biosynthesis</keyword>
<keyword id="KW-1185">Reference proteome</keyword>
<organism>
    <name type="scientific">Nocardia farcinica (strain IFM 10152)</name>
    <dbReference type="NCBI Taxonomy" id="247156"/>
    <lineage>
        <taxon>Bacteria</taxon>
        <taxon>Bacillati</taxon>
        <taxon>Actinomycetota</taxon>
        <taxon>Actinomycetes</taxon>
        <taxon>Mycobacteriales</taxon>
        <taxon>Nocardiaceae</taxon>
        <taxon>Nocardia</taxon>
    </lineage>
</organism>
<proteinExistence type="inferred from homology"/>
<reference key="1">
    <citation type="journal article" date="2004" name="Proc. Natl. Acad. Sci. U.S.A.">
        <title>The complete genomic sequence of Nocardia farcinica IFM 10152.</title>
        <authorList>
            <person name="Ishikawa J."/>
            <person name="Yamashita A."/>
            <person name="Mikami Y."/>
            <person name="Hoshino Y."/>
            <person name="Kurita H."/>
            <person name="Hotta K."/>
            <person name="Shiba T."/>
            <person name="Hattori M."/>
        </authorList>
    </citation>
    <scope>NUCLEOTIDE SEQUENCE [LARGE SCALE GENOMIC DNA]</scope>
    <source>
        <strain>IFM 10152</strain>
    </source>
</reference>
<feature type="chain" id="PRO_0000100474" description="Phosphoribosylformylglycinamidine synthase subunit PurL">
    <location>
        <begin position="1"/>
        <end position="764"/>
    </location>
</feature>
<feature type="active site" evidence="1">
    <location>
        <position position="57"/>
    </location>
</feature>
<feature type="active site" description="Proton acceptor" evidence="1">
    <location>
        <position position="108"/>
    </location>
</feature>
<feature type="binding site" evidence="1">
    <location>
        <position position="60"/>
    </location>
    <ligand>
        <name>ATP</name>
        <dbReference type="ChEBI" id="CHEBI:30616"/>
    </ligand>
</feature>
<feature type="binding site" evidence="1">
    <location>
        <position position="104"/>
    </location>
    <ligand>
        <name>ATP</name>
        <dbReference type="ChEBI" id="CHEBI:30616"/>
    </ligand>
</feature>
<feature type="binding site" evidence="1">
    <location>
        <position position="106"/>
    </location>
    <ligand>
        <name>Mg(2+)</name>
        <dbReference type="ChEBI" id="CHEBI:18420"/>
        <label>1</label>
    </ligand>
</feature>
<feature type="binding site" evidence="1">
    <location>
        <begin position="107"/>
        <end position="110"/>
    </location>
    <ligand>
        <name>substrate</name>
    </ligand>
</feature>
<feature type="binding site" evidence="1">
    <location>
        <position position="129"/>
    </location>
    <ligand>
        <name>substrate</name>
    </ligand>
</feature>
<feature type="binding site" evidence="1">
    <location>
        <position position="130"/>
    </location>
    <ligand>
        <name>Mg(2+)</name>
        <dbReference type="ChEBI" id="CHEBI:18420"/>
        <label>2</label>
    </ligand>
</feature>
<feature type="binding site" evidence="1">
    <location>
        <position position="258"/>
    </location>
    <ligand>
        <name>substrate</name>
    </ligand>
</feature>
<feature type="binding site" evidence="1">
    <location>
        <position position="286"/>
    </location>
    <ligand>
        <name>Mg(2+)</name>
        <dbReference type="ChEBI" id="CHEBI:18420"/>
        <label>2</label>
    </ligand>
</feature>
<feature type="binding site" evidence="1">
    <location>
        <begin position="330"/>
        <end position="332"/>
    </location>
    <ligand>
        <name>substrate</name>
    </ligand>
</feature>
<feature type="binding site" evidence="1">
    <location>
        <position position="518"/>
    </location>
    <ligand>
        <name>ATP</name>
        <dbReference type="ChEBI" id="CHEBI:30616"/>
    </ligand>
</feature>
<feature type="binding site" evidence="1">
    <location>
        <position position="555"/>
    </location>
    <ligand>
        <name>ATP</name>
        <dbReference type="ChEBI" id="CHEBI:30616"/>
    </ligand>
</feature>
<feature type="binding site" evidence="1">
    <location>
        <position position="556"/>
    </location>
    <ligand>
        <name>Mg(2+)</name>
        <dbReference type="ChEBI" id="CHEBI:18420"/>
        <label>1</label>
    </ligand>
</feature>
<feature type="binding site" evidence="1">
    <location>
        <position position="558"/>
    </location>
    <ligand>
        <name>substrate</name>
    </ligand>
</feature>